<organism>
    <name type="scientific">Homo sapiens</name>
    <name type="common">Human</name>
    <dbReference type="NCBI Taxonomy" id="9606"/>
    <lineage>
        <taxon>Eukaryota</taxon>
        <taxon>Metazoa</taxon>
        <taxon>Chordata</taxon>
        <taxon>Craniata</taxon>
        <taxon>Vertebrata</taxon>
        <taxon>Euteleostomi</taxon>
        <taxon>Mammalia</taxon>
        <taxon>Eutheria</taxon>
        <taxon>Euarchontoglires</taxon>
        <taxon>Primates</taxon>
        <taxon>Haplorrhini</taxon>
        <taxon>Catarrhini</taxon>
        <taxon>Hominidae</taxon>
        <taxon>Homo</taxon>
    </lineage>
</organism>
<feature type="chain" id="PRO_0000247040" description="Dual 3',5'-cyclic-AMP and -GMP phosphodiesterase 11A">
    <location>
        <begin position="1"/>
        <end position="933"/>
    </location>
</feature>
<feature type="domain" description="GAF 1">
    <location>
        <begin position="217"/>
        <end position="370"/>
    </location>
</feature>
<feature type="domain" description="GAF 2">
    <location>
        <begin position="402"/>
        <end position="558"/>
    </location>
</feature>
<feature type="domain" description="PDEase" evidence="4">
    <location>
        <begin position="588"/>
        <end position="912"/>
    </location>
</feature>
<feature type="region of interest" description="Disordered" evidence="5">
    <location>
        <begin position="42"/>
        <end position="125"/>
    </location>
</feature>
<feature type="active site" description="Proton donor" evidence="1">
    <location>
        <position position="664"/>
    </location>
</feature>
<feature type="binding site" evidence="3">
    <location>
        <position position="424"/>
    </location>
    <ligand>
        <name>3',5'-cyclic GMP</name>
        <dbReference type="ChEBI" id="CHEBI:57746"/>
    </ligand>
</feature>
<feature type="binding site" evidence="4">
    <location>
        <position position="668"/>
    </location>
    <ligand>
        <name>a divalent metal cation</name>
        <dbReference type="ChEBI" id="CHEBI:60240"/>
        <label>1</label>
    </ligand>
</feature>
<feature type="binding site" evidence="4">
    <location>
        <position position="704"/>
    </location>
    <ligand>
        <name>a divalent metal cation</name>
        <dbReference type="ChEBI" id="CHEBI:60240"/>
        <label>1</label>
    </ligand>
</feature>
<feature type="binding site" evidence="4">
    <location>
        <position position="705"/>
    </location>
    <ligand>
        <name>a divalent metal cation</name>
        <dbReference type="ChEBI" id="CHEBI:60240"/>
        <label>1</label>
    </ligand>
</feature>
<feature type="binding site" evidence="4">
    <location>
        <position position="705"/>
    </location>
    <ligand>
        <name>a divalent metal cation</name>
        <dbReference type="ChEBI" id="CHEBI:60240"/>
        <label>2</label>
    </ligand>
</feature>
<feature type="binding site" evidence="4">
    <location>
        <position position="816"/>
    </location>
    <ligand>
        <name>a divalent metal cation</name>
        <dbReference type="ChEBI" id="CHEBI:60240"/>
        <label>1</label>
    </ligand>
</feature>
<feature type="modified residue" description="Phosphoserine" evidence="2">
    <location>
        <position position="162"/>
    </location>
</feature>
<feature type="modified residue" description="Phosphoserine" evidence="2">
    <location>
        <position position="163"/>
    </location>
</feature>
<feature type="modified residue" description="Phosphoserine" evidence="20">
    <location>
        <position position="239"/>
    </location>
</feature>
<feature type="splice variant" id="VSP_019898" description="In isoform 4." evidence="14">
    <location>
        <begin position="1"/>
        <end position="444"/>
    </location>
</feature>
<feature type="splice variant" id="VSP_019899" description="In isoform 3." evidence="16">
    <location>
        <begin position="1"/>
        <end position="358"/>
    </location>
</feature>
<feature type="splice variant" id="VSP_019900" description="In isoform 2." evidence="15 16">
    <location>
        <begin position="1"/>
        <end position="250"/>
    </location>
</feature>
<feature type="splice variant" id="VSP_019901" description="In isoform 2." evidence="15 16">
    <original>KTLVSKFFDVHAGTPLLPCSSTENSNEVQVPWGKGIIGYVGEHGETVNIPDAYQ</original>
    <variation>MLKQARRPLFRNVLSATQWKKVKITRLVQISGASLAEKQEKHQDFLIQRQTKTK</variation>
    <location>
        <begin position="251"/>
        <end position="304"/>
    </location>
</feature>
<feature type="sequence variant" id="VAR_027056" description="In dbSNP:rs75127279." evidence="13">
    <original>R</original>
    <variation>H</variation>
    <location>
        <position position="804"/>
    </location>
</feature>
<feature type="sequence variant" id="VAR_027057" description="In dbSNP:rs61306957." evidence="13">
    <original>R</original>
    <variation>G</variation>
    <location>
        <position position="867"/>
    </location>
</feature>
<feature type="mutagenesis site" description="Induces a decrease in enzyme activity due to the inability of cGMP to bind and stimulate enzyme activity." evidence="12">
    <original>D</original>
    <variation>A</variation>
    <location>
        <position position="355"/>
    </location>
</feature>
<feature type="sequence conflict" description="In Ref. 1; BAB16371, 4; BAB62712 and 6; AAI12394/AAI14432." evidence="18" ref="1 4 6">
    <original>R</original>
    <variation>Q</variation>
    <location>
        <position position="184"/>
    </location>
</feature>
<feature type="sequence conflict" description="In Ref. 1; BAB16371/BAB16372, 2; CAB82573, 3; AAG32023/CAC15567, 4; BAB62712/BAB62713/BAB62714 and 6; AAI12394/AAI14432." evidence="18" ref="1 2 3 4 6">
    <original>S</original>
    <variation>SS</variation>
    <location>
        <position position="921"/>
    </location>
</feature>
<gene>
    <name evidence="15 19" type="primary">PDE11A</name>
</gene>
<proteinExistence type="evidence at protein level"/>
<name>PDE11_HUMAN</name>
<sequence length="933" mass="104752">MAASRLDFGEVETFLDRHPELFEDYLMRKGKQEMVEKWLQRHSQGQGALGPRPSLAGTSSLAHSTCRGGSSVGGGTGPNGSAHSQPLPGGGDCGGVPLSPSWAGGSRGDGNLQRRASQKELRKSFARSKAIHVNRTYDEQVTSRAQEPLSSVRRRALLRKASSLPPTTAHILSALLESRVNLPRYPPTAIDYKCHLKKHNERQFFLELVKDISNDLDLTSLSYKILIFVCLMVDADRCSLFLVEGAAAGKKTLVSKFFDVHAGTPLLPCSSTENSNEVQVPWGKGIIGYVGEHGETVNIPDAYQDRRFNDEIDKLTGYKTKSLLCMPIRSSDGEIIGVAQAINKIPEGAPFTEDDEKVMQMYLPFCGIAISNAQLFAASRKEYERSRALLEVVNDLFEEQTDLEKIVKKIMHRAQTLLKCERCSVLLLEDIESPVVKFTKSFELMSPKCSADAENSFKESMEKSSYSDWLINNSIAELVASTGLPVNISDAYQDPRFDAEADQISGFHIRSVLCVPIWNSNHQIIGVAQVLNRLDGKPFDDADQRLFEAFVIFCGLGINNTIMYDQVKKSWAKQSVALDVLSYHATCSKAEVDKFKAANIPLVSELAIDDIHFDDFSLDVDAMITAALRMFMELGMVQKFKIDYETLCRWLLTVRKNYRMVLYHNWRHAFNVCQLMFAMLTTAGFQDILTEVEILAVIVGCLCHDLDHRGTNNAFQAKSGSALAQLYGTSATLEHHHFNHAVMILQSEGHNIFANLSSKEYSDLMQLLKQSILATDLTLYFERRTEFFELVSKGEYDWNIKNHRDIFRSMLMTACDLGAVTKPWEISRQVAELVTSEFFEQGDRERLELKLTPSAIFDRNRKDELPRLQLEWIDSICMPLYQALVKVNVKLKPMLDSVATNRSKWEELHQKRLLASTASSSPASVMVAKEDRN</sequence>
<dbReference type="EC" id="3.1.4.35" evidence="6 7 8 12"/>
<dbReference type="EC" id="3.1.4.53" evidence="6 7 8 12"/>
<dbReference type="EMBL" id="AB036704">
    <property type="protein sequence ID" value="BAB16371.1"/>
    <property type="molecule type" value="mRNA"/>
</dbReference>
<dbReference type="EMBL" id="AB038041">
    <property type="protein sequence ID" value="BAB16372.1"/>
    <property type="molecule type" value="mRNA"/>
</dbReference>
<dbReference type="EMBL" id="AJ251509">
    <property type="protein sequence ID" value="CAB82573.1"/>
    <property type="molecule type" value="mRNA"/>
</dbReference>
<dbReference type="EMBL" id="AF281865">
    <property type="protein sequence ID" value="AAG32023.1"/>
    <property type="molecule type" value="mRNA"/>
</dbReference>
<dbReference type="EMBL" id="AJ278682">
    <property type="protein sequence ID" value="CAC15567.1"/>
    <property type="molecule type" value="mRNA"/>
</dbReference>
<dbReference type="EMBL" id="AB048423">
    <property type="protein sequence ID" value="BAB62712.1"/>
    <property type="molecule type" value="Genomic_DNA"/>
</dbReference>
<dbReference type="EMBL" id="AB048423">
    <property type="protein sequence ID" value="BAB62713.2"/>
    <property type="molecule type" value="Genomic_DNA"/>
</dbReference>
<dbReference type="EMBL" id="AB048423">
    <property type="protein sequence ID" value="BAB62714.1"/>
    <property type="molecule type" value="Genomic_DNA"/>
</dbReference>
<dbReference type="EMBL" id="AC073834">
    <property type="status" value="NOT_ANNOTATED_CDS"/>
    <property type="molecule type" value="Genomic_DNA"/>
</dbReference>
<dbReference type="EMBL" id="AC073892">
    <property type="status" value="NOT_ANNOTATED_CDS"/>
    <property type="molecule type" value="Genomic_DNA"/>
</dbReference>
<dbReference type="EMBL" id="AC083824">
    <property type="status" value="NOT_ANNOTATED_CDS"/>
    <property type="molecule type" value="Genomic_DNA"/>
</dbReference>
<dbReference type="EMBL" id="AC011998">
    <property type="status" value="NOT_ANNOTATED_CDS"/>
    <property type="molecule type" value="Genomic_DNA"/>
</dbReference>
<dbReference type="EMBL" id="AC012499">
    <property type="protein sequence ID" value="AAY14803.1"/>
    <property type="molecule type" value="Genomic_DNA"/>
</dbReference>
<dbReference type="EMBL" id="BC112393">
    <property type="protein sequence ID" value="AAI12394.1"/>
    <property type="molecule type" value="mRNA"/>
</dbReference>
<dbReference type="EMBL" id="BC114431">
    <property type="protein sequence ID" value="AAI14432.1"/>
    <property type="molecule type" value="mRNA"/>
</dbReference>
<dbReference type="CCDS" id="CCDS33334.1">
    <molecule id="Q9HCR9-1"/>
</dbReference>
<dbReference type="CCDS" id="CCDS42785.1">
    <molecule id="Q9HCR9-2"/>
</dbReference>
<dbReference type="CCDS" id="CCDS42786.1">
    <molecule id="Q9HCR9-4"/>
</dbReference>
<dbReference type="CCDS" id="CCDS46459.1">
    <molecule id="Q9HCR9-3"/>
</dbReference>
<dbReference type="RefSeq" id="NP_001070664.1">
    <molecule id="Q9HCR9-4"/>
    <property type="nucleotide sequence ID" value="NM_001077196.2"/>
</dbReference>
<dbReference type="RefSeq" id="NP_001070665.1">
    <molecule id="Q9HCR9-2"/>
    <property type="nucleotide sequence ID" value="NM_001077197.2"/>
</dbReference>
<dbReference type="RefSeq" id="NP_001070826.1">
    <molecule id="Q9HCR9-3"/>
    <property type="nucleotide sequence ID" value="NM_001077358.2"/>
</dbReference>
<dbReference type="RefSeq" id="NP_058649.3">
    <molecule id="Q9HCR9-1"/>
    <property type="nucleotide sequence ID" value="NM_016953.3"/>
</dbReference>
<dbReference type="SMR" id="Q9HCR9"/>
<dbReference type="BioGRID" id="119167">
    <property type="interactions" value="2"/>
</dbReference>
<dbReference type="FunCoup" id="Q9HCR9">
    <property type="interactions" value="207"/>
</dbReference>
<dbReference type="STRING" id="9606.ENSP00000286063"/>
<dbReference type="BindingDB" id="Q9HCR9"/>
<dbReference type="ChEMBL" id="CHEMBL2717"/>
<dbReference type="DrugBank" id="DB00201">
    <property type="generic name" value="Caffeine"/>
</dbReference>
<dbReference type="DrugBank" id="DB00820">
    <property type="generic name" value="Tadalafil"/>
</dbReference>
<dbReference type="DrugBank" id="DB09283">
    <property type="generic name" value="Trapidil"/>
</dbReference>
<dbReference type="DrugCentral" id="Q9HCR9"/>
<dbReference type="GuidetoPHARMACOLOGY" id="1311"/>
<dbReference type="GlyGen" id="Q9HCR9">
    <property type="glycosylation" value="1 site, 1 O-linked glycan (1 site)"/>
</dbReference>
<dbReference type="iPTMnet" id="Q9HCR9"/>
<dbReference type="PhosphoSitePlus" id="Q9HCR9"/>
<dbReference type="BioMuta" id="PDE11A"/>
<dbReference type="DMDM" id="296439264"/>
<dbReference type="MassIVE" id="Q9HCR9"/>
<dbReference type="PaxDb" id="9606-ENSP00000286063"/>
<dbReference type="PeptideAtlas" id="Q9HCR9"/>
<dbReference type="ProteomicsDB" id="81789">
    <molecule id="Q9HCR9-1"/>
</dbReference>
<dbReference type="ProteomicsDB" id="81790">
    <molecule id="Q9HCR9-2"/>
</dbReference>
<dbReference type="ProteomicsDB" id="81791">
    <molecule id="Q9HCR9-3"/>
</dbReference>
<dbReference type="ProteomicsDB" id="81792">
    <molecule id="Q9HCR9-4"/>
</dbReference>
<dbReference type="Antibodypedia" id="19565">
    <property type="antibodies" value="335 antibodies from 29 providers"/>
</dbReference>
<dbReference type="DNASU" id="50940"/>
<dbReference type="Ensembl" id="ENST00000286063.11">
    <molecule id="Q9HCR9-1"/>
    <property type="protein sequence ID" value="ENSP00000286063.5"/>
    <property type="gene ID" value="ENSG00000128655.19"/>
</dbReference>
<dbReference type="Ensembl" id="ENST00000358450.8">
    <molecule id="Q9HCR9-2"/>
    <property type="protein sequence ID" value="ENSP00000351232.4"/>
    <property type="gene ID" value="ENSG00000128655.19"/>
</dbReference>
<dbReference type="Ensembl" id="ENST00000389683.7">
    <molecule id="Q9HCR9-4"/>
    <property type="protein sequence ID" value="ENSP00000374333.3"/>
    <property type="gene ID" value="ENSG00000128655.19"/>
</dbReference>
<dbReference type="Ensembl" id="ENST00000409504.5">
    <molecule id="Q9HCR9-3"/>
    <property type="protein sequence ID" value="ENSP00000386539.1"/>
    <property type="gene ID" value="ENSG00000128655.19"/>
</dbReference>
<dbReference type="GeneID" id="50940"/>
<dbReference type="KEGG" id="hsa:50940"/>
<dbReference type="MANE-Select" id="ENST00000286063.11">
    <property type="protein sequence ID" value="ENSP00000286063.5"/>
    <property type="RefSeq nucleotide sequence ID" value="NM_016953.4"/>
    <property type="RefSeq protein sequence ID" value="NP_058649.3"/>
</dbReference>
<dbReference type="UCSC" id="uc002ulp.4">
    <molecule id="Q9HCR9-1"/>
    <property type="organism name" value="human"/>
</dbReference>
<dbReference type="AGR" id="HGNC:8773"/>
<dbReference type="CTD" id="50940"/>
<dbReference type="DisGeNET" id="50940"/>
<dbReference type="GeneCards" id="PDE11A"/>
<dbReference type="HGNC" id="HGNC:8773">
    <property type="gene designation" value="PDE11A"/>
</dbReference>
<dbReference type="HPA" id="ENSG00000128655">
    <property type="expression patterns" value="Tissue enhanced (liver, parathyroid gland)"/>
</dbReference>
<dbReference type="MalaCards" id="PDE11A"/>
<dbReference type="MIM" id="604961">
    <property type="type" value="gene"/>
</dbReference>
<dbReference type="MIM" id="610475">
    <property type="type" value="phenotype"/>
</dbReference>
<dbReference type="neXtProt" id="NX_Q9HCR9"/>
<dbReference type="OpenTargets" id="ENSG00000128655"/>
<dbReference type="Orphanet" id="1359">
    <property type="disease" value="Carney complex"/>
</dbReference>
<dbReference type="Orphanet" id="647782">
    <property type="disease" value="Isolated micronodular adrenocortical disease"/>
</dbReference>
<dbReference type="Orphanet" id="647772">
    <property type="disease" value="Isolated primary pigmented nodular adrenocortical disease"/>
</dbReference>
<dbReference type="PharmGKB" id="PA33121"/>
<dbReference type="VEuPathDB" id="HostDB:ENSG00000128655"/>
<dbReference type="eggNOG" id="KOG3689">
    <property type="taxonomic scope" value="Eukaryota"/>
</dbReference>
<dbReference type="GeneTree" id="ENSGT00940000162151"/>
<dbReference type="HOGENOM" id="CLU_006980_0_1_1"/>
<dbReference type="InParanoid" id="Q9HCR9"/>
<dbReference type="OMA" id="HIQARTR"/>
<dbReference type="OrthoDB" id="74705at2759"/>
<dbReference type="PAN-GO" id="Q9HCR9">
    <property type="GO annotations" value="4 GO annotations based on evolutionary models"/>
</dbReference>
<dbReference type="PhylomeDB" id="Q9HCR9"/>
<dbReference type="TreeFam" id="TF316499"/>
<dbReference type="BRENDA" id="3.1.4.17">
    <property type="organism ID" value="2681"/>
</dbReference>
<dbReference type="PathwayCommons" id="Q9HCR9"/>
<dbReference type="Reactome" id="R-HSA-418457">
    <property type="pathway name" value="cGMP effects"/>
</dbReference>
<dbReference type="Reactome" id="R-HSA-418555">
    <property type="pathway name" value="G alpha (s) signalling events"/>
</dbReference>
<dbReference type="SABIO-RK" id="Q9HCR9"/>
<dbReference type="SignaLink" id="Q9HCR9"/>
<dbReference type="SIGNOR" id="Q9HCR9"/>
<dbReference type="BioGRID-ORCS" id="50940">
    <property type="hits" value="14 hits in 1160 CRISPR screens"/>
</dbReference>
<dbReference type="ChiTaRS" id="PDE11A">
    <property type="organism name" value="human"/>
</dbReference>
<dbReference type="GeneWiki" id="PDE11A"/>
<dbReference type="GenomeRNAi" id="50940"/>
<dbReference type="Pharos" id="Q9HCR9">
    <property type="development level" value="Tchem"/>
</dbReference>
<dbReference type="PRO" id="PR:Q9HCR9"/>
<dbReference type="Proteomes" id="UP000005640">
    <property type="component" value="Chromosome 2"/>
</dbReference>
<dbReference type="RNAct" id="Q9HCR9">
    <property type="molecule type" value="protein"/>
</dbReference>
<dbReference type="Bgee" id="ENSG00000128655">
    <property type="expression patterns" value="Expressed in deltoid and 118 other cell types or tissues"/>
</dbReference>
<dbReference type="ExpressionAtlas" id="Q9HCR9">
    <property type="expression patterns" value="baseline and differential"/>
</dbReference>
<dbReference type="GO" id="GO:0005829">
    <property type="term" value="C:cytosol"/>
    <property type="evidence" value="ECO:0000304"/>
    <property type="project" value="Reactome"/>
</dbReference>
<dbReference type="GO" id="GO:0004118">
    <property type="term" value="F:3',5'-cGMP-stimulated cyclic-nucleotide phosphodiesterase activity"/>
    <property type="evidence" value="ECO:0000314"/>
    <property type="project" value="UniProtKB"/>
</dbReference>
<dbReference type="GO" id="GO:0004115">
    <property type="term" value="F:3',5'-cyclic-AMP phosphodiesterase activity"/>
    <property type="evidence" value="ECO:0000318"/>
    <property type="project" value="GO_Central"/>
</dbReference>
<dbReference type="GO" id="GO:0047555">
    <property type="term" value="F:3',5'-cyclic-GMP phosphodiesterase activity"/>
    <property type="evidence" value="ECO:0000318"/>
    <property type="project" value="GO_Central"/>
</dbReference>
<dbReference type="GO" id="GO:0004114">
    <property type="term" value="F:3',5'-cyclic-nucleotide phosphodiesterase activity"/>
    <property type="evidence" value="ECO:0000304"/>
    <property type="project" value="ProtInc"/>
</dbReference>
<dbReference type="GO" id="GO:0030553">
    <property type="term" value="F:cGMP binding"/>
    <property type="evidence" value="ECO:0000314"/>
    <property type="project" value="UniProtKB"/>
</dbReference>
<dbReference type="GO" id="GO:0004112">
    <property type="term" value="F:cyclic-nucleotide phosphodiesterase activity"/>
    <property type="evidence" value="ECO:0000303"/>
    <property type="project" value="UniProtKB"/>
</dbReference>
<dbReference type="GO" id="GO:0046872">
    <property type="term" value="F:metal ion binding"/>
    <property type="evidence" value="ECO:0007669"/>
    <property type="project" value="UniProtKB-KW"/>
</dbReference>
<dbReference type="GO" id="GO:0019933">
    <property type="term" value="P:cAMP-mediated signaling"/>
    <property type="evidence" value="ECO:0000318"/>
    <property type="project" value="GO_Central"/>
</dbReference>
<dbReference type="GO" id="GO:0010754">
    <property type="term" value="P:negative regulation of cGMP-mediated signaling"/>
    <property type="evidence" value="ECO:0000318"/>
    <property type="project" value="GO_Central"/>
</dbReference>
<dbReference type="GO" id="GO:0007165">
    <property type="term" value="P:signal transduction"/>
    <property type="evidence" value="ECO:0000304"/>
    <property type="project" value="ProtInc"/>
</dbReference>
<dbReference type="CDD" id="cd00077">
    <property type="entry name" value="HDc"/>
    <property type="match status" value="1"/>
</dbReference>
<dbReference type="FunFam" id="1.10.1300.10:FF:000003">
    <property type="entry name" value="Phosphodiesterase"/>
    <property type="match status" value="1"/>
</dbReference>
<dbReference type="FunFam" id="3.30.450.40:FF:000004">
    <property type="entry name" value="Phosphodiesterase"/>
    <property type="match status" value="1"/>
</dbReference>
<dbReference type="FunFam" id="3.30.450.40:FF:000018">
    <property type="entry name" value="Phosphodiesterase"/>
    <property type="match status" value="1"/>
</dbReference>
<dbReference type="Gene3D" id="3.30.450.40">
    <property type="match status" value="2"/>
</dbReference>
<dbReference type="Gene3D" id="1.10.1300.10">
    <property type="entry name" value="3'5'-cyclic nucleotide phosphodiesterase, catalytic domain"/>
    <property type="match status" value="1"/>
</dbReference>
<dbReference type="InterPro" id="IPR003018">
    <property type="entry name" value="GAF"/>
</dbReference>
<dbReference type="InterPro" id="IPR029016">
    <property type="entry name" value="GAF-like_dom_sf"/>
</dbReference>
<dbReference type="InterPro" id="IPR003607">
    <property type="entry name" value="HD/PDEase_dom"/>
</dbReference>
<dbReference type="InterPro" id="IPR023088">
    <property type="entry name" value="PDEase"/>
</dbReference>
<dbReference type="InterPro" id="IPR002073">
    <property type="entry name" value="PDEase_catalytic_dom"/>
</dbReference>
<dbReference type="InterPro" id="IPR036971">
    <property type="entry name" value="PDEase_catalytic_dom_sf"/>
</dbReference>
<dbReference type="InterPro" id="IPR023174">
    <property type="entry name" value="PDEase_CS"/>
</dbReference>
<dbReference type="PANTHER" id="PTHR11347">
    <property type="entry name" value="CYCLIC NUCLEOTIDE PHOSPHODIESTERASE"/>
    <property type="match status" value="1"/>
</dbReference>
<dbReference type="Pfam" id="PF01590">
    <property type="entry name" value="GAF"/>
    <property type="match status" value="2"/>
</dbReference>
<dbReference type="Pfam" id="PF00233">
    <property type="entry name" value="PDEase_I"/>
    <property type="match status" value="1"/>
</dbReference>
<dbReference type="PRINTS" id="PR00387">
    <property type="entry name" value="PDIESTERASE1"/>
</dbReference>
<dbReference type="SMART" id="SM00065">
    <property type="entry name" value="GAF"/>
    <property type="match status" value="2"/>
</dbReference>
<dbReference type="SMART" id="SM00471">
    <property type="entry name" value="HDc"/>
    <property type="match status" value="1"/>
</dbReference>
<dbReference type="SUPFAM" id="SSF55781">
    <property type="entry name" value="GAF domain-like"/>
    <property type="match status" value="2"/>
</dbReference>
<dbReference type="SUPFAM" id="SSF109604">
    <property type="entry name" value="HD-domain/PDEase-like"/>
    <property type="match status" value="1"/>
</dbReference>
<dbReference type="PROSITE" id="PS00126">
    <property type="entry name" value="PDEASE_I_1"/>
    <property type="match status" value="1"/>
</dbReference>
<dbReference type="PROSITE" id="PS51845">
    <property type="entry name" value="PDEASE_I_2"/>
    <property type="match status" value="1"/>
</dbReference>
<keyword id="KW-0021">Allosteric enzyme</keyword>
<keyword id="KW-0025">Alternative splicing</keyword>
<keyword id="KW-0114">cAMP</keyword>
<keyword id="KW-0140">cGMP</keyword>
<keyword id="KW-1062">Cushing syndrome</keyword>
<keyword id="KW-0963">Cytoplasm</keyword>
<keyword id="KW-0378">Hydrolase</keyword>
<keyword id="KW-0479">Metal-binding</keyword>
<keyword id="KW-0597">Phosphoprotein</keyword>
<keyword id="KW-1267">Proteomics identification</keyword>
<keyword id="KW-1185">Reference proteome</keyword>
<keyword id="KW-0677">Repeat</keyword>
<accession>Q9HCR9</accession>
<accession>Q14CD1</accession>
<accession>Q53T16</accession>
<accession>Q96S76</accession>
<accession>Q9GZY7</accession>
<accession>Q9HB46</accession>
<accession>Q9NY45</accession>
<reference key="1">
    <citation type="journal article" date="2000" name="J. Biol. Chem.">
        <title>Isolation and characterization of two novel phosphodiesterase PDE11A variants showing unique structure and tissue-specific expression.</title>
        <authorList>
            <person name="Yuasa K."/>
            <person name="Kotera J."/>
            <person name="Fujishige K."/>
            <person name="Michibata H."/>
            <person name="Sasaki T."/>
            <person name="Omori K."/>
        </authorList>
    </citation>
    <scope>NUCLEOTIDE SEQUENCE [MRNA] (ISOFORMS 1 AND 2)</scope>
    <scope>FUNCTION</scope>
    <scope>CATALYTIC ACTIVITY</scope>
    <scope>SUBCELLULAR LOCATION</scope>
    <scope>BIOPHYSICOCHEMICAL PROPERTIES</scope>
    <source>
        <tissue>Prostate</tissue>
    </source>
</reference>
<reference key="2">
    <citation type="journal article" date="2000" name="Proc. Natl. Acad. Sci. U.S.A.">
        <title>Molecular cloning and characterization of a distinct human phosphodiesterase gene family: PDE11A.</title>
        <authorList>
            <person name="Fawcett L."/>
            <person name="Baxendale R."/>
            <person name="Stacey P."/>
            <person name="McGrouther C."/>
            <person name="Harrow I."/>
            <person name="Soderling S."/>
            <person name="Hetman J."/>
            <person name="Beavo J.A."/>
            <person name="Phillips S.C."/>
        </authorList>
    </citation>
    <scope>NUCLEOTIDE SEQUENCE [MRNA] (ISOFORM 4)</scope>
    <scope>FUNCTION</scope>
    <scope>CATALYTIC ACTIVITY</scope>
    <scope>BIOPHYSICOCHEMICAL PROPERTIES</scope>
    <scope>ACTIVITY REGULATION</scope>
    <scope>TISSUE SPECIFICITY</scope>
    <source>
        <tissue>Skeletal muscle</tissue>
    </source>
</reference>
<reference key="3">
    <citation type="journal article" date="2000" name="Proc. Natl. Acad. Sci. U.S.A.">
        <title>Cloning and characterisation of two splice variants of human phosphodiesterase 11A.</title>
        <authorList>
            <person name="Hetman J.M."/>
            <person name="Robas N.M."/>
            <person name="Baxendale R."/>
            <person name="Fidock M."/>
            <person name="Phillips S.C."/>
            <person name="Soderling S.H."/>
            <person name="Beavo J.A."/>
        </authorList>
    </citation>
    <scope>NUCLEOTIDE SEQUENCE [MRNA] (ISOFORMS 2 AND 3)</scope>
    <scope>FUNCTION</scope>
    <scope>BIOPHYSICOCHEMICAL PROPERTIES</scope>
    <scope>ACTIVITY REGULATION</scope>
</reference>
<reference key="4">
    <citation type="journal article" date="2001" name="Eur. J. Biochem.">
        <title>Genomic organization of the human phosphodiesterase PDE11A gene: evolutionary relatedness with other PDEs containing GAF domains.</title>
        <authorList>
            <person name="Yuasa K."/>
            <person name="Kanoh Y."/>
            <person name="Okumura K."/>
            <person name="Omori K."/>
        </authorList>
    </citation>
    <scope>NUCLEOTIDE SEQUENCE [GENOMIC DNA]</scope>
    <scope>ALTERNATIVE SPLICING (ISOFORMS 1; 2 AND 4)</scope>
    <scope>TISSUE SPECIFICITY</scope>
</reference>
<reference key="5">
    <citation type="journal article" date="2005" name="Nature">
        <title>Generation and annotation of the DNA sequences of human chromosomes 2 and 4.</title>
        <authorList>
            <person name="Hillier L.W."/>
            <person name="Graves T.A."/>
            <person name="Fulton R.S."/>
            <person name="Fulton L.A."/>
            <person name="Pepin K.H."/>
            <person name="Minx P."/>
            <person name="Wagner-McPherson C."/>
            <person name="Layman D."/>
            <person name="Wylie K."/>
            <person name="Sekhon M."/>
            <person name="Becker M.C."/>
            <person name="Fewell G.A."/>
            <person name="Delehaunty K.D."/>
            <person name="Miner T.L."/>
            <person name="Nash W.E."/>
            <person name="Kremitzki C."/>
            <person name="Oddy L."/>
            <person name="Du H."/>
            <person name="Sun H."/>
            <person name="Bradshaw-Cordum H."/>
            <person name="Ali J."/>
            <person name="Carter J."/>
            <person name="Cordes M."/>
            <person name="Harris A."/>
            <person name="Isak A."/>
            <person name="van Brunt A."/>
            <person name="Nguyen C."/>
            <person name="Du F."/>
            <person name="Courtney L."/>
            <person name="Kalicki J."/>
            <person name="Ozersky P."/>
            <person name="Abbott S."/>
            <person name="Armstrong J."/>
            <person name="Belter E.A."/>
            <person name="Caruso L."/>
            <person name="Cedroni M."/>
            <person name="Cotton M."/>
            <person name="Davidson T."/>
            <person name="Desai A."/>
            <person name="Elliott G."/>
            <person name="Erb T."/>
            <person name="Fronick C."/>
            <person name="Gaige T."/>
            <person name="Haakenson W."/>
            <person name="Haglund K."/>
            <person name="Holmes A."/>
            <person name="Harkins R."/>
            <person name="Kim K."/>
            <person name="Kruchowski S.S."/>
            <person name="Strong C.M."/>
            <person name="Grewal N."/>
            <person name="Goyea E."/>
            <person name="Hou S."/>
            <person name="Levy A."/>
            <person name="Martinka S."/>
            <person name="Mead K."/>
            <person name="McLellan M.D."/>
            <person name="Meyer R."/>
            <person name="Randall-Maher J."/>
            <person name="Tomlinson C."/>
            <person name="Dauphin-Kohlberg S."/>
            <person name="Kozlowicz-Reilly A."/>
            <person name="Shah N."/>
            <person name="Swearengen-Shahid S."/>
            <person name="Snider J."/>
            <person name="Strong J.T."/>
            <person name="Thompson J."/>
            <person name="Yoakum M."/>
            <person name="Leonard S."/>
            <person name="Pearman C."/>
            <person name="Trani L."/>
            <person name="Radionenko M."/>
            <person name="Waligorski J.E."/>
            <person name="Wang C."/>
            <person name="Rock S.M."/>
            <person name="Tin-Wollam A.-M."/>
            <person name="Maupin R."/>
            <person name="Latreille P."/>
            <person name="Wendl M.C."/>
            <person name="Yang S.-P."/>
            <person name="Pohl C."/>
            <person name="Wallis J.W."/>
            <person name="Spieth J."/>
            <person name="Bieri T.A."/>
            <person name="Berkowicz N."/>
            <person name="Nelson J.O."/>
            <person name="Osborne J."/>
            <person name="Ding L."/>
            <person name="Meyer R."/>
            <person name="Sabo A."/>
            <person name="Shotland Y."/>
            <person name="Sinha P."/>
            <person name="Wohldmann P.E."/>
            <person name="Cook L.L."/>
            <person name="Hickenbotham M.T."/>
            <person name="Eldred J."/>
            <person name="Williams D."/>
            <person name="Jones T.A."/>
            <person name="She X."/>
            <person name="Ciccarelli F.D."/>
            <person name="Izaurralde E."/>
            <person name="Taylor J."/>
            <person name="Schmutz J."/>
            <person name="Myers R.M."/>
            <person name="Cox D.R."/>
            <person name="Huang X."/>
            <person name="McPherson J.D."/>
            <person name="Mardis E.R."/>
            <person name="Clifton S.W."/>
            <person name="Warren W.C."/>
            <person name="Chinwalla A.T."/>
            <person name="Eddy S.R."/>
            <person name="Marra M.A."/>
            <person name="Ovcharenko I."/>
            <person name="Furey T.S."/>
            <person name="Miller W."/>
            <person name="Eichler E.E."/>
            <person name="Bork P."/>
            <person name="Suyama M."/>
            <person name="Torrents D."/>
            <person name="Waterston R.H."/>
            <person name="Wilson R.K."/>
        </authorList>
    </citation>
    <scope>NUCLEOTIDE SEQUENCE [LARGE SCALE GENOMIC DNA]</scope>
</reference>
<reference key="6">
    <citation type="journal article" date="2004" name="Genome Res.">
        <title>The status, quality, and expansion of the NIH full-length cDNA project: the Mammalian Gene Collection (MGC).</title>
        <authorList>
            <consortium name="The MGC Project Team"/>
        </authorList>
    </citation>
    <scope>NUCLEOTIDE SEQUENCE [LARGE SCALE MRNA] (ISOFORM 1)</scope>
</reference>
<reference key="7">
    <citation type="journal article" date="2005" name="Int. J. Impot. Res.">
        <title>3',5'-cyclic nucleotide phosphodiesterase 11A: localization in human tissues.</title>
        <authorList>
            <person name="Loughney K."/>
            <person name="Taylor J."/>
            <person name="Florio V.A."/>
        </authorList>
    </citation>
    <scope>TISSUE SPECIFICITY</scope>
</reference>
<reference key="8">
    <citation type="journal article" date="2005" name="Int. J. Impot. Res.">
        <title>Phosphodiesterase 11 (PDE11): is it a player in human testicular function?</title>
        <authorList>
            <person name="Francis S.H."/>
        </authorList>
    </citation>
    <scope>ACTIVITY REGULATION</scope>
    <scope>TISSUE SPECIFICITY</scope>
</reference>
<reference key="9">
    <citation type="journal article" date="2006" name="J. Biol. Chem.">
        <title>cAMP is a ligand for the tandem GAF domain of human phosphodiesterase 10 and cGMP for the tandem GAF domain of phosphodiesterase 11.</title>
        <authorList>
            <person name="Gross-Langenhoff M."/>
            <person name="Hofbauer K."/>
            <person name="Weber J."/>
            <person name="Schultz A."/>
            <person name="Schultz J.E."/>
        </authorList>
    </citation>
    <scope>FUNCTION</scope>
    <scope>CATALYTIC ACTIVITY</scope>
    <scope>DOMAIN</scope>
    <scope>ACTIVITY REGULATION</scope>
    <scope>MUTAGENESIS OF ASP-355</scope>
</reference>
<reference key="10">
    <citation type="journal article" date="2006" name="Nat. Genet.">
        <title>A genome-wide scan identifies mutations in the gene encoding phosphodiesterase 11A4 (PDE11A) in individuals with adrenocortical hyperplasia.</title>
        <authorList>
            <person name="Horvath A."/>
            <person name="Boikos S."/>
            <person name="Giatzakis C."/>
            <person name="Robinson-White A."/>
            <person name="Groussin L."/>
            <person name="Griffin K.J."/>
            <person name="Stein E."/>
            <person name="Levine E."/>
            <person name="Delimpasi G."/>
            <person name="Hsiao H.P."/>
            <person name="Keil M."/>
            <person name="Heyerdahl S."/>
            <person name="Matyakhina L."/>
            <person name="Libe R."/>
            <person name="Fratticci A."/>
            <person name="Kirschner L.S."/>
            <person name="Cramer K."/>
            <person name="Gaillard R.C."/>
            <person name="Bertagna X."/>
            <person name="Carney J.A."/>
            <person name="Bertherat J."/>
            <person name="Bossis I."/>
            <person name="Stratakis C.A."/>
        </authorList>
    </citation>
    <scope>INVOLVEMENT IN PPNAD2</scope>
    <scope>TISSUE SPECIFICITY</scope>
    <scope>VARIANTS HIS-804 AND GLY-867</scope>
</reference>
<reference key="11">
    <citation type="journal article" date="2009" name="Sci. Signal.">
        <title>Quantitative phosphoproteomic analysis of T cell receptor signaling reveals system-wide modulation of protein-protein interactions.</title>
        <authorList>
            <person name="Mayya V."/>
            <person name="Lundgren D.H."/>
            <person name="Hwang S.-I."/>
            <person name="Rezaul K."/>
            <person name="Wu L."/>
            <person name="Eng J.K."/>
            <person name="Rodionov V."/>
            <person name="Han D.K."/>
        </authorList>
    </citation>
    <scope>PHOSPHORYLATION [LARGE SCALE ANALYSIS] AT SER-239</scope>
    <scope>IDENTIFICATION BY MASS SPECTROMETRY [LARGE SCALE ANALYSIS]</scope>
    <source>
        <tissue>Leukemic T-cell</tissue>
    </source>
</reference>
<comment type="function">
    <text evidence="6 7 8 12">Plays a role in signal transduction by regulating the intracellular concentration of cyclic nucleotides cAMP and cGMP (PubMed:10725373, PubMed:10906126, PubMed:11050148, PubMed:16330539). Catalyzes the hydrolysis of both cAMP and cGMP to 5'-AMP and 5'-GMP, respectively (PubMed:10725373, PubMed:10906126, PubMed:11050148).</text>
</comment>
<comment type="catalytic activity">
    <reaction evidence="6 7 8 12">
        <text>3',5'-cyclic GMP + H2O = GMP + H(+)</text>
        <dbReference type="Rhea" id="RHEA:16957"/>
        <dbReference type="ChEBI" id="CHEBI:15377"/>
        <dbReference type="ChEBI" id="CHEBI:15378"/>
        <dbReference type="ChEBI" id="CHEBI:57746"/>
        <dbReference type="ChEBI" id="CHEBI:58115"/>
        <dbReference type="EC" id="3.1.4.35"/>
    </reaction>
</comment>
<comment type="catalytic activity">
    <reaction evidence="6 7 8 12">
        <text>3',5'-cyclic AMP + H2O = AMP + H(+)</text>
        <dbReference type="Rhea" id="RHEA:25277"/>
        <dbReference type="ChEBI" id="CHEBI:15377"/>
        <dbReference type="ChEBI" id="CHEBI:15378"/>
        <dbReference type="ChEBI" id="CHEBI:58165"/>
        <dbReference type="ChEBI" id="CHEBI:456215"/>
        <dbReference type="EC" id="3.1.4.53"/>
    </reaction>
</comment>
<comment type="cofactor">
    <cofactor evidence="1">
        <name>a divalent metal cation</name>
        <dbReference type="ChEBI" id="CHEBI:60240"/>
    </cofactor>
    <text evidence="1">Binds 2 divalent metal cations per subunit. Site 1 may preferentially bind zinc ions, while site 2 has a preference for magnesium and/or manganese ions.</text>
</comment>
<comment type="activity regulation">
    <text evidence="6 8 11 12">Inhibited by 3-isobutyl-1-methylxanthine (IBMX), zaprinast and dipyridamole. cGMP acts as an allosteric activator. Weakly inhibited by Sildenafil (Viagra) and Tadalafil (Cialis); however, the fact that the protein is probably absent from testis, suggests that it is not biologically relevant and is not related with erectile dysfunction.</text>
</comment>
<comment type="biophysicochemical properties">
    <kinetics>
        <KM evidence="6 7 8">3 uM for cAMP (isoform 1)</KM>
        <KM evidence="6 7 8">1.4 uM for cGMP (isoform 1)</KM>
        <KM evidence="6 7 8">3 uM for cAMP (isoform 2)</KM>
        <KM evidence="6 7 8">1.5 uM for cGMP (isoform 2)</KM>
        <KM evidence="6 7 8">3.3 uM for cAMP (isoform 3)</KM>
        <KM evidence="6 7 8">3.7 uM for cGMP (isoform 3)</KM>
        <KM evidence="6 7 8">1.04 uM for cAMP (isoform 4)</KM>
        <KM evidence="6 7 8">0.52 uM for cGMP (isoform 4)</KM>
        <Vmax evidence="6 7 8">3.6 pmol/min/ug enzyme with cAMP as substrate (isoform 4)</Vmax>
        <Vmax evidence="6 7 8">3.9 pmol/min/ug enzyme with cGMP as substrate (isoform 4)</Vmax>
        <Vmax evidence="6 7 8">270.0 pmol/min/ug enzyme with cAMP as substrate (isoform 1)</Vmax>
        <Vmax evidence="6 7 8">120.0 pmol/min/ug enzyme with cGMP as substrate (isoform 1)</Vmax>
    </kinetics>
</comment>
<comment type="subcellular location">
    <subcellularLocation>
        <location evidence="7">Cytoplasm</location>
        <location evidence="7">Cytosol</location>
    </subcellularLocation>
</comment>
<comment type="alternative products">
    <event type="alternative splicing"/>
    <isoform>
        <id>Q9HCR9-1</id>
        <name>1</name>
        <name evidence="17">PDE11A4</name>
        <sequence type="displayed"/>
    </isoform>
    <isoform>
        <id>Q9HCR9-2</id>
        <name>2</name>
        <name evidence="17">PDE11A3</name>
        <sequence type="described" ref="VSP_019900 VSP_019901"/>
    </isoform>
    <isoform>
        <id>Q9HCR9-3</id>
        <name>3</name>
        <name evidence="17">PDE11A2</name>
        <sequence type="described" ref="VSP_019899"/>
    </isoform>
    <isoform>
        <id>Q9HCR9-4</id>
        <name>4</name>
        <name evidence="17">PDE11A1</name>
        <sequence type="described" ref="VSP_019898"/>
    </isoform>
</comment>
<comment type="tissue specificity">
    <text evidence="6 9 10 11 13">Isoform 1 is present in prostate, pituitary, heart and liver. It is however not present in testis nor in penis, suggesting that weak inhibition by Tadalafil (Cialis) is not relevant (at protein level). Isoform 2 may be expressed in testis. Isoform 4 is expressed in adrenal cortex.</text>
</comment>
<comment type="domain">
    <text evidence="12">The tandem GAF domains bind cGMP, and regulate enzyme activity. The binding of cGMP stimulates enzyme activity.</text>
</comment>
<comment type="disease" evidence="13">
    <disease id="DI-00941">
        <name>Primary pigmented nodular adrenocortical disease 2</name>
        <acronym>PPNAD2</acronym>
        <description>A rare bilateral adrenal defect causing ACTH-independent Cushing syndrome. Macroscopic appearance of the adrenals is characteristic with small pigmented micronodules observed in the cortex. Adrenal glands show overall normal size and weight, and multiple small yellow-to-dark brown nodules surrounded by a cortex with a uniform appearance. Microscopically, there are moderate diffuse cortical hyperplasia with mostly nonpigmented nodules, multiple capsular deficits and massive circumscribed and infiltrating extra-adrenal cortical excrescences with micronodules. Clinical manifestations of Cushing syndrome include facial and truncal obesity, abdominal striae, muscular weakness, osteoporosis, arterial hypertension, diabetes.</description>
        <dbReference type="MIM" id="610475"/>
    </disease>
    <text>The disease is caused by variants affecting the gene represented in this entry.</text>
</comment>
<comment type="similarity">
    <text evidence="18">Belongs to the cyclic nucleotide phosphodiesterase family.</text>
</comment>
<comment type="online information" name="Atlas of Genetics and Cytogenetics in Oncology and Haematology">
    <link uri="https://atlasgeneticsoncology.org/gene/44448/PDE11A"/>
</comment>
<evidence type="ECO:0000250" key="1">
    <source>
        <dbReference type="UniProtKB" id="O76083"/>
    </source>
</evidence>
<evidence type="ECO:0000250" key="2">
    <source>
        <dbReference type="UniProtKB" id="P0C1Q2"/>
    </source>
</evidence>
<evidence type="ECO:0000250" key="3">
    <source>
        <dbReference type="UniProtKB" id="Q922S4"/>
    </source>
</evidence>
<evidence type="ECO:0000255" key="4">
    <source>
        <dbReference type="PROSITE-ProRule" id="PRU01192"/>
    </source>
</evidence>
<evidence type="ECO:0000256" key="5">
    <source>
        <dbReference type="SAM" id="MobiDB-lite"/>
    </source>
</evidence>
<evidence type="ECO:0000269" key="6">
    <source>
    </source>
</evidence>
<evidence type="ECO:0000269" key="7">
    <source>
    </source>
</evidence>
<evidence type="ECO:0000269" key="8">
    <source>
    </source>
</evidence>
<evidence type="ECO:0000269" key="9">
    <source>
    </source>
</evidence>
<evidence type="ECO:0000269" key="10">
    <source>
    </source>
</evidence>
<evidence type="ECO:0000269" key="11">
    <source>
    </source>
</evidence>
<evidence type="ECO:0000269" key="12">
    <source>
    </source>
</evidence>
<evidence type="ECO:0000269" key="13">
    <source>
    </source>
</evidence>
<evidence type="ECO:0000303" key="14">
    <source>
    </source>
</evidence>
<evidence type="ECO:0000303" key="15">
    <source>
    </source>
</evidence>
<evidence type="ECO:0000303" key="16">
    <source>
    </source>
</evidence>
<evidence type="ECO:0000303" key="17">
    <source>
    </source>
</evidence>
<evidence type="ECO:0000305" key="18"/>
<evidence type="ECO:0000312" key="19">
    <source>
        <dbReference type="HGNC" id="HGNC:8773"/>
    </source>
</evidence>
<evidence type="ECO:0007744" key="20">
    <source>
    </source>
</evidence>
<protein>
    <recommendedName>
        <fullName>Dual 3',5'-cyclic-AMP and -GMP phosphodiesterase 11A</fullName>
        <ecNumber evidence="6 7 8 12">3.1.4.35</ecNumber>
        <ecNumber evidence="6 7 8 12">3.1.4.53</ecNumber>
    </recommendedName>
    <alternativeName>
        <fullName evidence="15">cAMP and cGMP phosphodiesterase 11A</fullName>
    </alternativeName>
</protein>